<protein>
    <recommendedName>
        <fullName evidence="1">Small ribosomal subunit protein bS16c</fullName>
    </recommendedName>
    <alternativeName>
        <fullName evidence="2">30S ribosomal protein S16, chloroplastic</fullName>
    </alternativeName>
</protein>
<keyword id="KW-0150">Chloroplast</keyword>
<keyword id="KW-0934">Plastid</keyword>
<keyword id="KW-0687">Ribonucleoprotein</keyword>
<keyword id="KW-0689">Ribosomal protein</keyword>
<name>RR16_GOSBA</name>
<proteinExistence type="inferred from homology"/>
<geneLocation type="chloroplast"/>
<sequence>MVKLRLKRCGRKQRAVYRIVVIDVRSRREGRDLRKVGFYDPINNQTYLNVPAILYFLEKGAQPTATVHDILKKAGVFTELTLNQTKFT</sequence>
<reference key="1">
    <citation type="journal article" date="2006" name="Genes Genet. Syst.">
        <title>Complete nucleotide sequence of the cotton (Gossypium barbadense L.) chloroplast genome with a comparative analysis of sequences among 9 dicot plants.</title>
        <authorList>
            <person name="Ibrahim R.I.H."/>
            <person name="Azuma J."/>
            <person name="Sakamoto M."/>
        </authorList>
    </citation>
    <scope>NUCLEOTIDE SEQUENCE [LARGE SCALE GENOMIC DNA]</scope>
</reference>
<gene>
    <name evidence="1" type="primary">rps16</name>
</gene>
<evidence type="ECO:0000255" key="1">
    <source>
        <dbReference type="HAMAP-Rule" id="MF_00385"/>
    </source>
</evidence>
<evidence type="ECO:0000305" key="2"/>
<feature type="chain" id="PRO_0000276947" description="Small ribosomal subunit protein bS16c">
    <location>
        <begin position="1"/>
        <end position="88"/>
    </location>
</feature>
<accession>A0ZZ17</accession>
<organism>
    <name type="scientific">Gossypium barbadense</name>
    <name type="common">Sea Island cotton</name>
    <name type="synonym">Hibiscus barbadensis</name>
    <dbReference type="NCBI Taxonomy" id="3634"/>
    <lineage>
        <taxon>Eukaryota</taxon>
        <taxon>Viridiplantae</taxon>
        <taxon>Streptophyta</taxon>
        <taxon>Embryophyta</taxon>
        <taxon>Tracheophyta</taxon>
        <taxon>Spermatophyta</taxon>
        <taxon>Magnoliopsida</taxon>
        <taxon>eudicotyledons</taxon>
        <taxon>Gunneridae</taxon>
        <taxon>Pentapetalae</taxon>
        <taxon>rosids</taxon>
        <taxon>malvids</taxon>
        <taxon>Malvales</taxon>
        <taxon>Malvaceae</taxon>
        <taxon>Malvoideae</taxon>
        <taxon>Gossypium</taxon>
    </lineage>
</organism>
<dbReference type="EMBL" id="AP009123">
    <property type="protein sequence ID" value="BAF41229.1"/>
    <property type="molecule type" value="Genomic_DNA"/>
</dbReference>
<dbReference type="RefSeq" id="YP_913169.1">
    <property type="nucleotide sequence ID" value="NC_008641.1"/>
</dbReference>
<dbReference type="SMR" id="A0ZZ17"/>
<dbReference type="GeneID" id="4575251"/>
<dbReference type="GO" id="GO:0009507">
    <property type="term" value="C:chloroplast"/>
    <property type="evidence" value="ECO:0007669"/>
    <property type="project" value="UniProtKB-SubCell"/>
</dbReference>
<dbReference type="GO" id="GO:0005739">
    <property type="term" value="C:mitochondrion"/>
    <property type="evidence" value="ECO:0007669"/>
    <property type="project" value="GOC"/>
</dbReference>
<dbReference type="GO" id="GO:0015935">
    <property type="term" value="C:small ribosomal subunit"/>
    <property type="evidence" value="ECO:0007669"/>
    <property type="project" value="TreeGrafter"/>
</dbReference>
<dbReference type="GO" id="GO:0003735">
    <property type="term" value="F:structural constituent of ribosome"/>
    <property type="evidence" value="ECO:0007669"/>
    <property type="project" value="InterPro"/>
</dbReference>
<dbReference type="GO" id="GO:0032543">
    <property type="term" value="P:mitochondrial translation"/>
    <property type="evidence" value="ECO:0007669"/>
    <property type="project" value="TreeGrafter"/>
</dbReference>
<dbReference type="FunFam" id="3.30.1320.10:FF:000003">
    <property type="entry name" value="30S ribosomal protein S16, chloroplastic"/>
    <property type="match status" value="1"/>
</dbReference>
<dbReference type="Gene3D" id="3.30.1320.10">
    <property type="match status" value="1"/>
</dbReference>
<dbReference type="HAMAP" id="MF_00385">
    <property type="entry name" value="Ribosomal_bS16"/>
    <property type="match status" value="1"/>
</dbReference>
<dbReference type="InterPro" id="IPR000307">
    <property type="entry name" value="Ribosomal_bS16"/>
</dbReference>
<dbReference type="InterPro" id="IPR020592">
    <property type="entry name" value="Ribosomal_bS16_CS"/>
</dbReference>
<dbReference type="InterPro" id="IPR023803">
    <property type="entry name" value="Ribosomal_bS16_dom_sf"/>
</dbReference>
<dbReference type="NCBIfam" id="TIGR00002">
    <property type="entry name" value="S16"/>
    <property type="match status" value="1"/>
</dbReference>
<dbReference type="PANTHER" id="PTHR12919">
    <property type="entry name" value="30S RIBOSOMAL PROTEIN S16"/>
    <property type="match status" value="1"/>
</dbReference>
<dbReference type="PANTHER" id="PTHR12919:SF20">
    <property type="entry name" value="SMALL RIBOSOMAL SUBUNIT PROTEIN BS16M"/>
    <property type="match status" value="1"/>
</dbReference>
<dbReference type="Pfam" id="PF00886">
    <property type="entry name" value="Ribosomal_S16"/>
    <property type="match status" value="1"/>
</dbReference>
<dbReference type="SUPFAM" id="SSF54565">
    <property type="entry name" value="Ribosomal protein S16"/>
    <property type="match status" value="1"/>
</dbReference>
<dbReference type="PROSITE" id="PS00732">
    <property type="entry name" value="RIBOSOMAL_S16"/>
    <property type="match status" value="1"/>
</dbReference>
<comment type="subcellular location">
    <subcellularLocation>
        <location>Plastid</location>
        <location>Chloroplast</location>
    </subcellularLocation>
</comment>
<comment type="similarity">
    <text evidence="1">Belongs to the bacterial ribosomal protein bS16 family.</text>
</comment>